<keyword id="KW-0489">Methyltransferase</keyword>
<keyword id="KW-1185">Reference proteome</keyword>
<keyword id="KW-0949">S-adenosyl-L-methionine</keyword>
<keyword id="KW-0808">Transferase</keyword>
<reference key="1">
    <citation type="journal article" date="2002" name="Nature">
        <title>Sequence and analysis of chromosome 2 of Dictyostelium discoideum.</title>
        <authorList>
            <person name="Gloeckner G."/>
            <person name="Eichinger L."/>
            <person name="Szafranski K."/>
            <person name="Pachebat J.A."/>
            <person name="Bankier A.T."/>
            <person name="Dear P.H."/>
            <person name="Lehmann R."/>
            <person name="Baumgart C."/>
            <person name="Parra G."/>
            <person name="Abril J.F."/>
            <person name="Guigo R."/>
            <person name="Kumpf K."/>
            <person name="Tunggal B."/>
            <person name="Cox E.C."/>
            <person name="Quail M.A."/>
            <person name="Platzer M."/>
            <person name="Rosenthal A."/>
            <person name="Noegel A.A."/>
        </authorList>
    </citation>
    <scope>NUCLEOTIDE SEQUENCE [LARGE SCALE GENOMIC DNA]</scope>
    <source>
        <strain>AX4</strain>
    </source>
</reference>
<reference key="2">
    <citation type="journal article" date="2005" name="Nature">
        <title>The genome of the social amoeba Dictyostelium discoideum.</title>
        <authorList>
            <person name="Eichinger L."/>
            <person name="Pachebat J.A."/>
            <person name="Gloeckner G."/>
            <person name="Rajandream M.A."/>
            <person name="Sucgang R."/>
            <person name="Berriman M."/>
            <person name="Song J."/>
            <person name="Olsen R."/>
            <person name="Szafranski K."/>
            <person name="Xu Q."/>
            <person name="Tunggal B."/>
            <person name="Kummerfeld S."/>
            <person name="Madera M."/>
            <person name="Konfortov B.A."/>
            <person name="Rivero F."/>
            <person name="Bankier A.T."/>
            <person name="Lehmann R."/>
            <person name="Hamlin N."/>
            <person name="Davies R."/>
            <person name="Gaudet P."/>
            <person name="Fey P."/>
            <person name="Pilcher K."/>
            <person name="Chen G."/>
            <person name="Saunders D."/>
            <person name="Sodergren E.J."/>
            <person name="Davis P."/>
            <person name="Kerhornou A."/>
            <person name="Nie X."/>
            <person name="Hall N."/>
            <person name="Anjard C."/>
            <person name="Hemphill L."/>
            <person name="Bason N."/>
            <person name="Farbrother P."/>
            <person name="Desany B."/>
            <person name="Just E."/>
            <person name="Morio T."/>
            <person name="Rost R."/>
            <person name="Churcher C.M."/>
            <person name="Cooper J."/>
            <person name="Haydock S."/>
            <person name="van Driessche N."/>
            <person name="Cronin A."/>
            <person name="Goodhead I."/>
            <person name="Muzny D.M."/>
            <person name="Mourier T."/>
            <person name="Pain A."/>
            <person name="Lu M."/>
            <person name="Harper D."/>
            <person name="Lindsay R."/>
            <person name="Hauser H."/>
            <person name="James K.D."/>
            <person name="Quiles M."/>
            <person name="Madan Babu M."/>
            <person name="Saito T."/>
            <person name="Buchrieser C."/>
            <person name="Wardroper A."/>
            <person name="Felder M."/>
            <person name="Thangavelu M."/>
            <person name="Johnson D."/>
            <person name="Knights A."/>
            <person name="Loulseged H."/>
            <person name="Mungall K.L."/>
            <person name="Oliver K."/>
            <person name="Price C."/>
            <person name="Quail M.A."/>
            <person name="Urushihara H."/>
            <person name="Hernandez J."/>
            <person name="Rabbinowitsch E."/>
            <person name="Steffen D."/>
            <person name="Sanders M."/>
            <person name="Ma J."/>
            <person name="Kohara Y."/>
            <person name="Sharp S."/>
            <person name="Simmonds M.N."/>
            <person name="Spiegler S."/>
            <person name="Tivey A."/>
            <person name="Sugano S."/>
            <person name="White B."/>
            <person name="Walker D."/>
            <person name="Woodward J.R."/>
            <person name="Winckler T."/>
            <person name="Tanaka Y."/>
            <person name="Shaulsky G."/>
            <person name="Schleicher M."/>
            <person name="Weinstock G.M."/>
            <person name="Rosenthal A."/>
            <person name="Cox E.C."/>
            <person name="Chisholm R.L."/>
            <person name="Gibbs R.A."/>
            <person name="Loomis W.F."/>
            <person name="Platzer M."/>
            <person name="Kay R.R."/>
            <person name="Williams J.G."/>
            <person name="Dear P.H."/>
            <person name="Noegel A.A."/>
            <person name="Barrell B.G."/>
            <person name="Kuspa A."/>
        </authorList>
    </citation>
    <scope>NUCLEOTIDE SEQUENCE [LARGE SCALE GENOMIC DNA]</scope>
    <source>
        <strain>AX4</strain>
    </source>
</reference>
<name>OMT4_DICDI</name>
<evidence type="ECO:0000255" key="1">
    <source>
        <dbReference type="PROSITE-ProRule" id="PRU01020"/>
    </source>
</evidence>
<protein>
    <recommendedName>
        <fullName>O-methyltransferase 4</fullName>
        <ecNumber>2.1.1.-</ecNumber>
    </recommendedName>
</protein>
<proteinExistence type="inferred from homology"/>
<accession>Q86I40</accession>
<accession>Q553Z9</accession>
<organism>
    <name type="scientific">Dictyostelium discoideum</name>
    <name type="common">Social amoeba</name>
    <dbReference type="NCBI Taxonomy" id="44689"/>
    <lineage>
        <taxon>Eukaryota</taxon>
        <taxon>Amoebozoa</taxon>
        <taxon>Evosea</taxon>
        <taxon>Eumycetozoa</taxon>
        <taxon>Dictyostelia</taxon>
        <taxon>Dictyosteliales</taxon>
        <taxon>Dictyosteliaceae</taxon>
        <taxon>Dictyostelium</taxon>
    </lineage>
</organism>
<comment type="catalytic activity">
    <reaction>
        <text>(3,5-dichloro-2,4,6-trihydroxyphenyl)hexan-1-one + S-adenosyl-L-methionine = 1-(3,5-dichloro-2,6-dihydroxy-4-methoxyphenyl)hexan-1-one + S-adenosyl-L-homocysteine + H(+)</text>
        <dbReference type="Rhea" id="RHEA:48396"/>
        <dbReference type="ChEBI" id="CHEBI:15378"/>
        <dbReference type="ChEBI" id="CHEBI:57856"/>
        <dbReference type="ChEBI" id="CHEBI:59789"/>
        <dbReference type="ChEBI" id="CHEBI:90397"/>
        <dbReference type="ChEBI" id="CHEBI:90398"/>
    </reaction>
</comment>
<comment type="similarity">
    <text evidence="1">Belongs to the class I-like SAM-binding methyltransferase superfamily. Cation-independent O-methyltransferase family. COMT subfamily.</text>
</comment>
<gene>
    <name type="primary">omt4</name>
    <name type="ORF">DDB_G0275013</name>
</gene>
<feature type="chain" id="PRO_0000367584" description="O-methyltransferase 4">
    <location>
        <begin position="1"/>
        <end position="338"/>
    </location>
</feature>
<feature type="active site" description="Proton acceptor" evidence="1">
    <location>
        <position position="248"/>
    </location>
</feature>
<feature type="binding site" evidence="1">
    <location>
        <position position="184"/>
    </location>
    <ligand>
        <name>S-adenosyl-L-methionine</name>
        <dbReference type="ChEBI" id="CHEBI:59789"/>
    </ligand>
</feature>
<feature type="binding site" evidence="1">
    <location>
        <position position="207"/>
    </location>
    <ligand>
        <name>S-adenosyl-L-methionine</name>
        <dbReference type="ChEBI" id="CHEBI:59789"/>
    </ligand>
</feature>
<feature type="binding site" evidence="1">
    <location>
        <position position="230"/>
    </location>
    <ligand>
        <name>S-adenosyl-L-methionine</name>
        <dbReference type="ChEBI" id="CHEBI:59789"/>
    </ligand>
</feature>
<feature type="binding site" evidence="1">
    <location>
        <position position="231"/>
    </location>
    <ligand>
        <name>S-adenosyl-L-methionine</name>
        <dbReference type="ChEBI" id="CHEBI:59789"/>
    </ligand>
</feature>
<feature type="binding site" evidence="1">
    <location>
        <position position="244"/>
    </location>
    <ligand>
        <name>S-adenosyl-L-methionine</name>
        <dbReference type="ChEBI" id="CHEBI:59789"/>
    </ligand>
</feature>
<feature type="binding site" evidence="1">
    <location>
        <position position="245"/>
    </location>
    <ligand>
        <name>S-adenosyl-L-methionine</name>
        <dbReference type="ChEBI" id="CHEBI:59789"/>
    </ligand>
</feature>
<dbReference type="EC" id="2.1.1.-"/>
<dbReference type="EMBL" id="AAFI02000013">
    <property type="protein sequence ID" value="EAL69787.1"/>
    <property type="molecule type" value="Genomic_DNA"/>
</dbReference>
<dbReference type="RefSeq" id="XP_643812.1">
    <property type="nucleotide sequence ID" value="XM_638720.1"/>
</dbReference>
<dbReference type="SMR" id="Q86I40"/>
<dbReference type="PaxDb" id="44689-DDB0266732"/>
<dbReference type="EnsemblProtists" id="EAL69787">
    <property type="protein sequence ID" value="EAL69787"/>
    <property type="gene ID" value="DDB_G0275013"/>
</dbReference>
<dbReference type="GeneID" id="8619858"/>
<dbReference type="KEGG" id="ddi:DDB_G0275013"/>
<dbReference type="dictyBase" id="DDB_G0275013">
    <property type="gene designation" value="omt4"/>
</dbReference>
<dbReference type="VEuPathDB" id="AmoebaDB:DDB_G0275013"/>
<dbReference type="eggNOG" id="KOG3178">
    <property type="taxonomic scope" value="Eukaryota"/>
</dbReference>
<dbReference type="HOGENOM" id="CLU_005533_12_0_1"/>
<dbReference type="InParanoid" id="Q86I40"/>
<dbReference type="OMA" id="NDCNWQF"/>
<dbReference type="PhylomeDB" id="Q86I40"/>
<dbReference type="PRO" id="PR:Q86I40"/>
<dbReference type="Proteomes" id="UP000002195">
    <property type="component" value="Chromosome 2"/>
</dbReference>
<dbReference type="GO" id="GO:0106268">
    <property type="term" value="F:3,5-dichloro-THPH methyl transferase activity"/>
    <property type="evidence" value="ECO:0007669"/>
    <property type="project" value="RHEA"/>
</dbReference>
<dbReference type="GO" id="GO:0008171">
    <property type="term" value="F:O-methyltransferase activity"/>
    <property type="evidence" value="ECO:0000318"/>
    <property type="project" value="GO_Central"/>
</dbReference>
<dbReference type="GO" id="GO:0046983">
    <property type="term" value="F:protein dimerization activity"/>
    <property type="evidence" value="ECO:0007669"/>
    <property type="project" value="InterPro"/>
</dbReference>
<dbReference type="GO" id="GO:0008757">
    <property type="term" value="F:S-adenosylmethionine-dependent methyltransferase activity"/>
    <property type="evidence" value="ECO:0000318"/>
    <property type="project" value="GO_Central"/>
</dbReference>
<dbReference type="GO" id="GO:0009058">
    <property type="term" value="P:biosynthetic process"/>
    <property type="evidence" value="ECO:0000318"/>
    <property type="project" value="GO_Central"/>
</dbReference>
<dbReference type="GO" id="GO:0032259">
    <property type="term" value="P:methylation"/>
    <property type="evidence" value="ECO:0000318"/>
    <property type="project" value="GO_Central"/>
</dbReference>
<dbReference type="FunFam" id="3.40.50.150:FF:000407">
    <property type="entry name" value="O-methyltransferase 4"/>
    <property type="match status" value="1"/>
</dbReference>
<dbReference type="Gene3D" id="3.40.50.150">
    <property type="entry name" value="Vaccinia Virus protein VP39"/>
    <property type="match status" value="1"/>
</dbReference>
<dbReference type="Gene3D" id="1.10.10.10">
    <property type="entry name" value="Winged helix-like DNA-binding domain superfamily/Winged helix DNA-binding domain"/>
    <property type="match status" value="1"/>
</dbReference>
<dbReference type="InterPro" id="IPR016461">
    <property type="entry name" value="COMT-like"/>
</dbReference>
<dbReference type="InterPro" id="IPR001077">
    <property type="entry name" value="O_MeTrfase_dom"/>
</dbReference>
<dbReference type="InterPro" id="IPR012967">
    <property type="entry name" value="Plant_O-MeTrfase_dimerisation"/>
</dbReference>
<dbReference type="InterPro" id="IPR029063">
    <property type="entry name" value="SAM-dependent_MTases_sf"/>
</dbReference>
<dbReference type="InterPro" id="IPR036388">
    <property type="entry name" value="WH-like_DNA-bd_sf"/>
</dbReference>
<dbReference type="InterPro" id="IPR036390">
    <property type="entry name" value="WH_DNA-bd_sf"/>
</dbReference>
<dbReference type="PANTHER" id="PTHR43712:SF2">
    <property type="entry name" value="O-METHYLTRANSFERASE CICE"/>
    <property type="match status" value="1"/>
</dbReference>
<dbReference type="PANTHER" id="PTHR43712">
    <property type="entry name" value="PUTATIVE (AFU_ORTHOLOGUE AFUA_4G14580)-RELATED"/>
    <property type="match status" value="1"/>
</dbReference>
<dbReference type="Pfam" id="PF08100">
    <property type="entry name" value="Dimerisation"/>
    <property type="match status" value="1"/>
</dbReference>
<dbReference type="Pfam" id="PF00891">
    <property type="entry name" value="Methyltransf_2"/>
    <property type="match status" value="1"/>
</dbReference>
<dbReference type="PIRSF" id="PIRSF005739">
    <property type="entry name" value="O-mtase"/>
    <property type="match status" value="1"/>
</dbReference>
<dbReference type="SUPFAM" id="SSF53335">
    <property type="entry name" value="S-adenosyl-L-methionine-dependent methyltransferases"/>
    <property type="match status" value="1"/>
</dbReference>
<dbReference type="SUPFAM" id="SSF46785">
    <property type="entry name" value="Winged helix' DNA-binding domain"/>
    <property type="match status" value="1"/>
</dbReference>
<dbReference type="PROSITE" id="PS51683">
    <property type="entry name" value="SAM_OMT_II"/>
    <property type="match status" value="1"/>
</dbReference>
<sequence length="338" mass="38762">MEREENIEIKNSFDYILNSVTGLIESRLLYILVKHKVPEVFEDGLPKTYQQVAEKTQTSPIGIYKLLRYFTTSIGLFEEDLNNLGTFKKTPKSSLFTSDKYATFVEWCNNDLAYNMMKSLDLSIETGEPQCHKSLGVNSWWDLIKKPGEEEFFKNAMKVSSSEAIESALKFIDFSPFKKIVDIGGSHGRFVCEILEKYPNSHGINFDLESFFNGAGELIKNPRLEHKSGNFFESVPEGDCYILKRILHDWKDEDCIKILETIGKSILPGGKVIIFDCIINPKNYNKGHLYLDVMMFHFFGSEEKTIKQFSNISDKAGFKIDKVVNEIPNYCLIISKKD</sequence>